<name>PRIB_SHEB5</name>
<feature type="chain" id="PRO_1000083291" description="Replication restart protein PriB">
    <location>
        <begin position="1"/>
        <end position="101"/>
    </location>
</feature>
<feature type="domain" description="SSB" evidence="1">
    <location>
        <begin position="1"/>
        <end position="101"/>
    </location>
</feature>
<gene>
    <name evidence="1" type="primary">priB</name>
    <name type="ordered locus">Sbal_3642</name>
</gene>
<organism>
    <name type="scientific">Shewanella baltica (strain OS155 / ATCC BAA-1091)</name>
    <dbReference type="NCBI Taxonomy" id="325240"/>
    <lineage>
        <taxon>Bacteria</taxon>
        <taxon>Pseudomonadati</taxon>
        <taxon>Pseudomonadota</taxon>
        <taxon>Gammaproteobacteria</taxon>
        <taxon>Alteromonadales</taxon>
        <taxon>Shewanellaceae</taxon>
        <taxon>Shewanella</taxon>
    </lineage>
</organism>
<dbReference type="EMBL" id="CP000563">
    <property type="protein sequence ID" value="ABN63117.1"/>
    <property type="molecule type" value="Genomic_DNA"/>
</dbReference>
<dbReference type="RefSeq" id="WP_006083043.1">
    <property type="nucleotide sequence ID" value="NC_009052.1"/>
</dbReference>
<dbReference type="SMR" id="A3D8Q4"/>
<dbReference type="STRING" id="325240.Sbal_3642"/>
<dbReference type="GeneID" id="11771053"/>
<dbReference type="KEGG" id="sbl:Sbal_3642"/>
<dbReference type="HOGENOM" id="CLU_166075_0_0_6"/>
<dbReference type="OrthoDB" id="9180733at2"/>
<dbReference type="Proteomes" id="UP000001557">
    <property type="component" value="Chromosome"/>
</dbReference>
<dbReference type="GO" id="GO:1990077">
    <property type="term" value="C:primosome complex"/>
    <property type="evidence" value="ECO:0007669"/>
    <property type="project" value="UniProtKB-KW"/>
</dbReference>
<dbReference type="GO" id="GO:0003697">
    <property type="term" value="F:single-stranded DNA binding"/>
    <property type="evidence" value="ECO:0007669"/>
    <property type="project" value="UniProtKB-UniRule"/>
</dbReference>
<dbReference type="GO" id="GO:0006269">
    <property type="term" value="P:DNA replication, synthesis of primer"/>
    <property type="evidence" value="ECO:0007669"/>
    <property type="project" value="UniProtKB-KW"/>
</dbReference>
<dbReference type="FunFam" id="2.40.50.140:FF:000332">
    <property type="entry name" value="Primosomal replication protein N"/>
    <property type="match status" value="1"/>
</dbReference>
<dbReference type="Gene3D" id="2.40.50.140">
    <property type="entry name" value="Nucleic acid-binding proteins"/>
    <property type="match status" value="1"/>
</dbReference>
<dbReference type="HAMAP" id="MF_00720">
    <property type="entry name" value="PriB"/>
    <property type="match status" value="1"/>
</dbReference>
<dbReference type="InterPro" id="IPR012340">
    <property type="entry name" value="NA-bd_OB-fold"/>
</dbReference>
<dbReference type="InterPro" id="IPR000424">
    <property type="entry name" value="Primosome_PriB/ssb"/>
</dbReference>
<dbReference type="InterPro" id="IPR023646">
    <property type="entry name" value="Prisomal_replication_PriB"/>
</dbReference>
<dbReference type="NCBIfam" id="TIGR04418">
    <property type="entry name" value="PriB_gamma"/>
    <property type="match status" value="1"/>
</dbReference>
<dbReference type="Pfam" id="PF22657">
    <property type="entry name" value="SSB_1"/>
    <property type="match status" value="1"/>
</dbReference>
<dbReference type="PIRSF" id="PIRSF003135">
    <property type="entry name" value="Primosomal_n"/>
    <property type="match status" value="1"/>
</dbReference>
<dbReference type="SUPFAM" id="SSF50249">
    <property type="entry name" value="Nucleic acid-binding proteins"/>
    <property type="match status" value="1"/>
</dbReference>
<dbReference type="PROSITE" id="PS50935">
    <property type="entry name" value="SSB"/>
    <property type="match status" value="1"/>
</dbReference>
<accession>A3D8Q4</accession>
<evidence type="ECO:0000255" key="1">
    <source>
        <dbReference type="HAMAP-Rule" id="MF_00720"/>
    </source>
</evidence>
<sequence length="101" mass="11352">MTTNNLVLSGTITRSRRFKSPAGIAHSVIMLEHKSQRYEADMLRNVYVQIQVILSGPRFESVAEDLKAGVEVQVQGFMTLQQGRNGQNRLVIHAENVELKT</sequence>
<protein>
    <recommendedName>
        <fullName evidence="1">Replication restart protein PriB</fullName>
    </recommendedName>
</protein>
<proteinExistence type="inferred from homology"/>
<reference key="1">
    <citation type="submission" date="2007-02" db="EMBL/GenBank/DDBJ databases">
        <title>Complete sequence of chromosome of Shewanella baltica OS155.</title>
        <authorList>
            <consortium name="US DOE Joint Genome Institute"/>
            <person name="Copeland A."/>
            <person name="Lucas S."/>
            <person name="Lapidus A."/>
            <person name="Barry K."/>
            <person name="Detter J.C."/>
            <person name="Glavina del Rio T."/>
            <person name="Hammon N."/>
            <person name="Israni S."/>
            <person name="Dalin E."/>
            <person name="Tice H."/>
            <person name="Pitluck S."/>
            <person name="Sims D.R."/>
            <person name="Brettin T."/>
            <person name="Bruce D."/>
            <person name="Han C."/>
            <person name="Tapia R."/>
            <person name="Brainard J."/>
            <person name="Schmutz J."/>
            <person name="Larimer F."/>
            <person name="Land M."/>
            <person name="Hauser L."/>
            <person name="Kyrpides N."/>
            <person name="Mikhailova N."/>
            <person name="Brettar I."/>
            <person name="Klappenbach J."/>
            <person name="Konstantinidis K."/>
            <person name="Rodrigues J."/>
            <person name="Tiedje J."/>
            <person name="Richardson P."/>
        </authorList>
    </citation>
    <scope>NUCLEOTIDE SEQUENCE [LARGE SCALE GENOMIC DNA]</scope>
    <source>
        <strain>OS155 / ATCC BAA-1091</strain>
    </source>
</reference>
<keyword id="KW-0235">DNA replication</keyword>
<keyword id="KW-0238">DNA-binding</keyword>
<keyword id="KW-0639">Primosome</keyword>
<keyword id="KW-1185">Reference proteome</keyword>
<comment type="function">
    <text evidence="1">Involved in the restart of stalled replication forks, which reloads the replicative helicase on sites other than the origin of replication; the PriA-PriB pathway is the major replication restart pathway. During primosome assembly it facilitates complex formation between PriA and DnaT on DNA; stabilizes PriA on DNA. Stimulates the DNA unwinding activity of PriA helicase.</text>
</comment>
<comment type="subunit">
    <text evidence="1">Homodimer. Interacts with PriA and DnaT. Component of the replication restart primosome. Primosome assembly occurs via a 'hand-off' mechanism. PriA binds to replication forks, subsequently PriB then DnaT bind; DnaT then displaces ssDNA to generate the helicase loading substrate.</text>
</comment>
<comment type="similarity">
    <text evidence="1">Belongs to the PriB family.</text>
</comment>